<comment type="function">
    <text evidence="6 7 8 12">Dioxygenase; part of the gene cluster that mediates the biosynthesis of fumonisins B1 (FB1), B2 (FB2), B3 (FB3), and B4 (FB4), which are carcinogenic mycotoxins (PubMed:14602658, PubMed:15066782, PubMed:16536629). Within the pathway, FUM3 performs the C-5 hydroxylation present in FB1 and FB2 and which occurs late in the biosynthesis (PubMed:14602658, PubMed:15066782, PubMed:16536629). The biosynthesis starts with the FUM1-catalyzed carbon chain assembly from one molecule of acetyl-CoA, eight molecules of malonyl-CoA, and two molecules of methionine (in S-adenosyl form). The C18 polyketide chain is released from the enzyme by a nucleophilic attack of a carbanion, which is derived from R-carbon of alanine by decarboxylation, on the carbonyl carbon of polyketide acyl chain. This step is catalyzed by the pyridoxal 5'-phosphate-dependent aminoacyl transferase FUM8. The resultant 3-keto intermediate is then stereospecifically reduced to a 3-hydroxyl product by reductase FUM13. Subsequent oxidations at C-10 by the cytochrome P450 monooxygenase FUM2, C-14 and C-15 by FUM6, FUM12 or FUM15, tricarballylic esterification of the hydroxyl groups on C-14 and C-15 by acyltransferase FUM14, and C-5 hydroxylation by 2-keto-glutarate-dependent dioxygenase FUM3 furnish the biosynthesis of fumonisins. The tricarballylic moieties are most likely derived from the citric acid cycle, and their addition to the carbon backbone may involve FUM7, FUM10, FUM11 and FUM14 (Probable).</text>
</comment>
<comment type="cofactor">
    <cofactor evidence="1">
        <name>Fe cation</name>
        <dbReference type="ChEBI" id="CHEBI:24875"/>
    </cofactor>
</comment>
<comment type="pathway">
    <text evidence="4 5 6 7 8">Mycotoxin biosynthesis.</text>
</comment>
<comment type="subunit">
    <text evidence="3">Homodimer.</text>
</comment>
<comment type="induction">
    <text evidence="4">Expression correlates with fuminisins production (PubMed:11728154).</text>
</comment>
<comment type="disruption phenotype">
    <text evidence="6 8">Produces only fumonisins B3 and B4 (PubMed:14602658, PubMed:16536629).</text>
</comment>
<comment type="similarity">
    <text evidence="11">Belongs to the PhyH family.</text>
</comment>
<name>FUM3_GIBM7</name>
<gene>
    <name evidence="10" type="primary">FUM3</name>
    <name evidence="9" type="synonym">FUM9</name>
    <name type="ORF">FVEG_00320</name>
</gene>
<evidence type="ECO:0000250" key="1">
    <source>
        <dbReference type="UniProtKB" id="A0A097ZPD9"/>
    </source>
</evidence>
<evidence type="ECO:0000250" key="2">
    <source>
        <dbReference type="UniProtKB" id="O14832"/>
    </source>
</evidence>
<evidence type="ECO:0000250" key="3">
    <source>
        <dbReference type="UniProtKB" id="Q4WAW9"/>
    </source>
</evidence>
<evidence type="ECO:0000269" key="4">
    <source>
    </source>
</evidence>
<evidence type="ECO:0000269" key="5">
    <source>
    </source>
</evidence>
<evidence type="ECO:0000269" key="6">
    <source>
    </source>
</evidence>
<evidence type="ECO:0000269" key="7">
    <source>
    </source>
</evidence>
<evidence type="ECO:0000269" key="8">
    <source>
    </source>
</evidence>
<evidence type="ECO:0000303" key="9">
    <source>
    </source>
</evidence>
<evidence type="ECO:0000303" key="10">
    <source>
    </source>
</evidence>
<evidence type="ECO:0000305" key="11"/>
<evidence type="ECO:0000305" key="12">
    <source>
    </source>
</evidence>
<proteinExistence type="evidence at protein level"/>
<accession>W7LKX6</accession>
<accession>Q9HGD7</accession>
<dbReference type="EC" id="1.14.11.-" evidence="7"/>
<dbReference type="EMBL" id="AF155773">
    <property type="protein sequence ID" value="AAG27131.1"/>
    <property type="molecule type" value="Genomic_DNA"/>
</dbReference>
<dbReference type="EMBL" id="CM000578">
    <property type="protein sequence ID" value="EWG36200.1"/>
    <property type="molecule type" value="Genomic_DNA"/>
</dbReference>
<dbReference type="RefSeq" id="XP_018742391.1">
    <property type="nucleotide sequence ID" value="XM_018886757.1"/>
</dbReference>
<dbReference type="SMR" id="W7LKX6"/>
<dbReference type="STRING" id="334819.W7LKX6"/>
<dbReference type="EnsemblFungi" id="FVEG_00320T0">
    <property type="protein sequence ID" value="FVEG_00320T0"/>
    <property type="gene ID" value="FVEG_00320"/>
</dbReference>
<dbReference type="GeneID" id="30058697"/>
<dbReference type="KEGG" id="fvr:FVEG_00320"/>
<dbReference type="VEuPathDB" id="FungiDB:FVEG_00320"/>
<dbReference type="eggNOG" id="ENOG502S7ZW">
    <property type="taxonomic scope" value="Eukaryota"/>
</dbReference>
<dbReference type="HOGENOM" id="CLU_047725_1_0_1"/>
<dbReference type="OMA" id="GHNGDYW"/>
<dbReference type="OrthoDB" id="134077at110618"/>
<dbReference type="Proteomes" id="UP000009096">
    <property type="component" value="Chromosome 1"/>
</dbReference>
<dbReference type="GO" id="GO:0051213">
    <property type="term" value="F:dioxygenase activity"/>
    <property type="evidence" value="ECO:0007669"/>
    <property type="project" value="UniProtKB-KW"/>
</dbReference>
<dbReference type="GO" id="GO:0046872">
    <property type="term" value="F:metal ion binding"/>
    <property type="evidence" value="ECO:0007669"/>
    <property type="project" value="UniProtKB-KW"/>
</dbReference>
<dbReference type="GO" id="GO:1900541">
    <property type="term" value="P:fumonisin biosynthetic process"/>
    <property type="evidence" value="ECO:0000315"/>
    <property type="project" value="GO_Central"/>
</dbReference>
<dbReference type="Gene3D" id="2.60.120.620">
    <property type="entry name" value="q2cbj1_9rhob like domain"/>
    <property type="match status" value="1"/>
</dbReference>
<dbReference type="InterPro" id="IPR008775">
    <property type="entry name" value="Phytyl_CoA_dOase-like"/>
</dbReference>
<dbReference type="PANTHER" id="PTHR20883:SF19">
    <property type="entry name" value="MULTIFUNCTIONAL DIOXYGENASE AUSE"/>
    <property type="match status" value="1"/>
</dbReference>
<dbReference type="PANTHER" id="PTHR20883">
    <property type="entry name" value="PHYTANOYL-COA DIOXYGENASE DOMAIN CONTAINING 1"/>
    <property type="match status" value="1"/>
</dbReference>
<dbReference type="Pfam" id="PF05721">
    <property type="entry name" value="PhyH"/>
    <property type="match status" value="1"/>
</dbReference>
<dbReference type="SUPFAM" id="SSF51197">
    <property type="entry name" value="Clavaminate synthase-like"/>
    <property type="match status" value="1"/>
</dbReference>
<sequence>MNKEKVPQNAVPNGRTKLRQVTSATPLDEVFQYWEEDGAIVIKGLLTSAQVEQLNQEMGPILQKVAIGGHASDVRLQNFHGMKTKRAGDLTNNSAVFRDHLLDNDFIHAVSQRCFAYRGKMGPDAYWLGSASTIHVGPGQKPQTLHRDLGSYPIFWMLGPQGPESQINFLVATTDFTEANGATRIIPGSHKWEFNQHGDRDMTIPAEMKAGDCLLISGKVIHGTGGNKTDQERGCLAVTMCANFLAPEEAHPFIVSMGTAKKLPVRSQRCLGFRSQWPQSSPGLWTKDYSELALHLGLDD</sequence>
<feature type="chain" id="PRO_0000441145" description="Dioxygenase FUM3">
    <location>
        <begin position="1"/>
        <end position="300"/>
    </location>
</feature>
<feature type="binding site" evidence="2">
    <location>
        <position position="146"/>
    </location>
    <ligand>
        <name>Fe cation</name>
        <dbReference type="ChEBI" id="CHEBI:24875"/>
    </ligand>
</feature>
<feature type="binding site" evidence="2">
    <location>
        <position position="148"/>
    </location>
    <ligand>
        <name>Fe cation</name>
        <dbReference type="ChEBI" id="CHEBI:24875"/>
    </ligand>
</feature>
<feature type="binding site" evidence="2">
    <location>
        <position position="222"/>
    </location>
    <ligand>
        <name>Fe cation</name>
        <dbReference type="ChEBI" id="CHEBI:24875"/>
    </ligand>
</feature>
<organism>
    <name type="scientific">Gibberella moniliformis (strain M3125 / FGSC 7600)</name>
    <name type="common">Maize ear and stalk rot fungus</name>
    <name type="synonym">Fusarium verticillioides</name>
    <dbReference type="NCBI Taxonomy" id="334819"/>
    <lineage>
        <taxon>Eukaryota</taxon>
        <taxon>Fungi</taxon>
        <taxon>Dikarya</taxon>
        <taxon>Ascomycota</taxon>
        <taxon>Pezizomycotina</taxon>
        <taxon>Sordariomycetes</taxon>
        <taxon>Hypocreomycetidae</taxon>
        <taxon>Hypocreales</taxon>
        <taxon>Nectriaceae</taxon>
        <taxon>Fusarium</taxon>
        <taxon>Fusarium fujikuroi species complex</taxon>
    </lineage>
</organism>
<protein>
    <recommendedName>
        <fullName evidence="10">Dioxygenase FUM3</fullName>
        <ecNumber evidence="7">1.14.11.-</ecNumber>
    </recommendedName>
    <alternativeName>
        <fullName evidence="10">Fumonisin biosynthesis cluster protein 3</fullName>
    </alternativeName>
</protein>
<keyword id="KW-0223">Dioxygenase</keyword>
<keyword id="KW-0408">Iron</keyword>
<keyword id="KW-0479">Metal-binding</keyword>
<keyword id="KW-0560">Oxidoreductase</keyword>
<keyword id="KW-1185">Reference proteome</keyword>
<reference key="1">
    <citation type="journal article" date="2001" name="Fungal Genet. Biol.">
        <title>Characterization of four clustered and coregulated genes associated with fumonisin biosynthesis in Fusarium verticillioides.</title>
        <authorList>
            <person name="Seo J.A."/>
            <person name="Proctor R.H."/>
            <person name="Plattner R.D."/>
        </authorList>
    </citation>
    <scope>NUCLEOTIDE SEQUENCE [GENOMIC DNA]</scope>
    <scope>INDUCTION</scope>
    <scope>PATHWAY</scope>
    <source>
        <strain>M3125 / FGSC 7600</strain>
    </source>
</reference>
<reference key="2">
    <citation type="journal article" date="2003" name="Fungal Genet. Biol.">
        <title>Co-expression of 15 contiguous genes delineates a fumonisin biosynthetic gene cluster in Gibberella moniliformis.</title>
        <authorList>
            <person name="Proctor R.H."/>
            <person name="Brown D.W."/>
            <person name="Plattner R.D."/>
            <person name="Desjardins A.E."/>
        </authorList>
    </citation>
    <scope>NUCLEOTIDE SEQUENCE [GENOMIC DNA]</scope>
    <scope>PATHWAY</scope>
    <source>
        <strain>M3125 / FGSC 7600</strain>
    </source>
</reference>
<reference key="3">
    <citation type="journal article" date="2010" name="Nature">
        <title>Comparative genomics reveals mobile pathogenicity chromosomes in Fusarium.</title>
        <authorList>
            <person name="Ma L.-J."/>
            <person name="van der Does H.C."/>
            <person name="Borkovich K.A."/>
            <person name="Coleman J.J."/>
            <person name="Daboussi M.-J."/>
            <person name="Di Pietro A."/>
            <person name="Dufresne M."/>
            <person name="Freitag M."/>
            <person name="Grabherr M."/>
            <person name="Henrissat B."/>
            <person name="Houterman P.M."/>
            <person name="Kang S."/>
            <person name="Shim W.-B."/>
            <person name="Woloshuk C."/>
            <person name="Xie X."/>
            <person name="Xu J.-R."/>
            <person name="Antoniw J."/>
            <person name="Baker S.E."/>
            <person name="Bluhm B.H."/>
            <person name="Breakspear A."/>
            <person name="Brown D.W."/>
            <person name="Butchko R.A.E."/>
            <person name="Chapman S."/>
            <person name="Coulson R."/>
            <person name="Coutinho P.M."/>
            <person name="Danchin E.G.J."/>
            <person name="Diener A."/>
            <person name="Gale L.R."/>
            <person name="Gardiner D.M."/>
            <person name="Goff S."/>
            <person name="Hammond-Kosack K.E."/>
            <person name="Hilburn K."/>
            <person name="Hua-Van A."/>
            <person name="Jonkers W."/>
            <person name="Kazan K."/>
            <person name="Kodira C.D."/>
            <person name="Koehrsen M."/>
            <person name="Kumar L."/>
            <person name="Lee Y.-H."/>
            <person name="Li L."/>
            <person name="Manners J.M."/>
            <person name="Miranda-Saavedra D."/>
            <person name="Mukherjee M."/>
            <person name="Park G."/>
            <person name="Park J."/>
            <person name="Park S.-Y."/>
            <person name="Proctor R.H."/>
            <person name="Regev A."/>
            <person name="Ruiz-Roldan M.C."/>
            <person name="Sain D."/>
            <person name="Sakthikumar S."/>
            <person name="Sykes S."/>
            <person name="Schwartz D.C."/>
            <person name="Turgeon B.G."/>
            <person name="Wapinski I."/>
            <person name="Yoder O."/>
            <person name="Young S."/>
            <person name="Zeng Q."/>
            <person name="Zhou S."/>
            <person name="Galagan J."/>
            <person name="Cuomo C.A."/>
            <person name="Kistler H.C."/>
            <person name="Rep M."/>
        </authorList>
    </citation>
    <scope>NUCLEOTIDE SEQUENCE [LARGE SCALE GENOMIC DNA]</scope>
    <source>
        <strain>M3125 / FGSC 7600</strain>
    </source>
</reference>
<reference key="4">
    <citation type="journal article" date="1996" name="Adv. Exp. Med. Biol.">
        <title>Genetic and biochemical aspects of fumonisin production.</title>
        <authorList>
            <person name="Desjardins A.E."/>
            <person name="Plattner R.D."/>
            <person name="Proctor R.H."/>
        </authorList>
    </citation>
    <scope>IDENTIFICATION</scope>
</reference>
<reference key="5">
    <citation type="journal article" date="2003" name="Appl. Environ. Microbiol.">
        <title>FUM9 is required for C-5 hydroxylation of fumonisins and complements the meitotically defined Fum3 locus in Gibberella moniliformis.</title>
        <authorList>
            <person name="Butchko R.A."/>
            <person name="Plattner R.D."/>
            <person name="Proctor R.H."/>
        </authorList>
    </citation>
    <scope>FUNCTION</scope>
    <scope>DISRUPTION PHENOTYPE</scope>
    <scope>PATHWAY</scope>
</reference>
<reference key="6">
    <citation type="journal article" date="2004" name="Appl. Environ. Microbiol.">
        <title>Fum3p, a 2-ketoglutarate-dependent dioxygenase required for C-5 hydroxylation of fumonisins in Fusarium verticillioides.</title>
        <authorList>
            <person name="Ding Y."/>
            <person name="Bojja R.S."/>
            <person name="Du L."/>
        </authorList>
    </citation>
    <scope>FUNCTION</scope>
    <scope>CATALYTIC ACTIVITY</scope>
    <scope>PATHWAY</scope>
</reference>
<reference key="7">
    <citation type="journal article" date="2006" name="J. Agric. Food Chem.">
        <title>Fumonisin production in the maize pathogen Fusarium verticillioides: genetic basis of naturally occurring chemical variation.</title>
        <authorList>
            <person name="Proctor R.H."/>
            <person name="Plattner R.D."/>
            <person name="Desjardins A.E."/>
            <person name="Busman M."/>
            <person name="Butchko R.A."/>
        </authorList>
    </citation>
    <scope>FUNCTION</scope>
    <scope>DISRUPTION PHENOTYPE</scope>
    <scope>PATHWAY</scope>
</reference>